<keyword id="KW-0687">Ribonucleoprotein</keyword>
<keyword id="KW-0689">Ribosomal protein</keyword>
<keyword id="KW-0694">RNA-binding</keyword>
<keyword id="KW-0699">rRNA-binding</keyword>
<keyword id="KW-0820">tRNA-binding</keyword>
<protein>
    <recommendedName>
        <fullName evidence="1">Large ribosomal subunit protein uL5</fullName>
    </recommendedName>
    <alternativeName>
        <fullName evidence="2">50S ribosomal protein L5</fullName>
    </alternativeName>
</protein>
<name>RL5_POLNS</name>
<dbReference type="EMBL" id="CP001010">
    <property type="protein sequence ID" value="ACB43390.1"/>
    <property type="molecule type" value="Genomic_DNA"/>
</dbReference>
<dbReference type="SMR" id="B1XSR3"/>
<dbReference type="STRING" id="452638.Pnec_0062"/>
<dbReference type="KEGG" id="pne:Pnec_0062"/>
<dbReference type="eggNOG" id="COG0094">
    <property type="taxonomic scope" value="Bacteria"/>
</dbReference>
<dbReference type="HOGENOM" id="CLU_061015_2_1_4"/>
<dbReference type="OrthoDB" id="9806626at2"/>
<dbReference type="GO" id="GO:1990904">
    <property type="term" value="C:ribonucleoprotein complex"/>
    <property type="evidence" value="ECO:0007669"/>
    <property type="project" value="UniProtKB-KW"/>
</dbReference>
<dbReference type="GO" id="GO:0005840">
    <property type="term" value="C:ribosome"/>
    <property type="evidence" value="ECO:0007669"/>
    <property type="project" value="UniProtKB-KW"/>
</dbReference>
<dbReference type="GO" id="GO:0019843">
    <property type="term" value="F:rRNA binding"/>
    <property type="evidence" value="ECO:0007669"/>
    <property type="project" value="UniProtKB-UniRule"/>
</dbReference>
<dbReference type="GO" id="GO:0003735">
    <property type="term" value="F:structural constituent of ribosome"/>
    <property type="evidence" value="ECO:0007669"/>
    <property type="project" value="InterPro"/>
</dbReference>
<dbReference type="GO" id="GO:0000049">
    <property type="term" value="F:tRNA binding"/>
    <property type="evidence" value="ECO:0007669"/>
    <property type="project" value="UniProtKB-UniRule"/>
</dbReference>
<dbReference type="GO" id="GO:0006412">
    <property type="term" value="P:translation"/>
    <property type="evidence" value="ECO:0007669"/>
    <property type="project" value="UniProtKB-UniRule"/>
</dbReference>
<dbReference type="FunFam" id="3.30.1440.10:FF:000001">
    <property type="entry name" value="50S ribosomal protein L5"/>
    <property type="match status" value="1"/>
</dbReference>
<dbReference type="Gene3D" id="3.30.1440.10">
    <property type="match status" value="1"/>
</dbReference>
<dbReference type="HAMAP" id="MF_01333_B">
    <property type="entry name" value="Ribosomal_uL5_B"/>
    <property type="match status" value="1"/>
</dbReference>
<dbReference type="InterPro" id="IPR002132">
    <property type="entry name" value="Ribosomal_uL5"/>
</dbReference>
<dbReference type="InterPro" id="IPR020930">
    <property type="entry name" value="Ribosomal_uL5_bac-type"/>
</dbReference>
<dbReference type="InterPro" id="IPR031309">
    <property type="entry name" value="Ribosomal_uL5_C"/>
</dbReference>
<dbReference type="InterPro" id="IPR020929">
    <property type="entry name" value="Ribosomal_uL5_CS"/>
</dbReference>
<dbReference type="InterPro" id="IPR022803">
    <property type="entry name" value="Ribosomal_uL5_dom_sf"/>
</dbReference>
<dbReference type="InterPro" id="IPR031310">
    <property type="entry name" value="Ribosomal_uL5_N"/>
</dbReference>
<dbReference type="NCBIfam" id="NF000585">
    <property type="entry name" value="PRK00010.1"/>
    <property type="match status" value="1"/>
</dbReference>
<dbReference type="PANTHER" id="PTHR11994">
    <property type="entry name" value="60S RIBOSOMAL PROTEIN L11-RELATED"/>
    <property type="match status" value="1"/>
</dbReference>
<dbReference type="Pfam" id="PF00281">
    <property type="entry name" value="Ribosomal_L5"/>
    <property type="match status" value="1"/>
</dbReference>
<dbReference type="Pfam" id="PF00673">
    <property type="entry name" value="Ribosomal_L5_C"/>
    <property type="match status" value="1"/>
</dbReference>
<dbReference type="PIRSF" id="PIRSF002161">
    <property type="entry name" value="Ribosomal_L5"/>
    <property type="match status" value="1"/>
</dbReference>
<dbReference type="SUPFAM" id="SSF55282">
    <property type="entry name" value="RL5-like"/>
    <property type="match status" value="1"/>
</dbReference>
<dbReference type="PROSITE" id="PS00358">
    <property type="entry name" value="RIBOSOMAL_L5"/>
    <property type="match status" value="1"/>
</dbReference>
<gene>
    <name evidence="1" type="primary">rplE</name>
    <name type="ordered locus">Pnec_0062</name>
</gene>
<proteinExistence type="inferred from homology"/>
<accession>B1XSR3</accession>
<evidence type="ECO:0000255" key="1">
    <source>
        <dbReference type="HAMAP-Rule" id="MF_01333"/>
    </source>
</evidence>
<evidence type="ECO:0000305" key="2"/>
<feature type="chain" id="PRO_1000166141" description="Large ribosomal subunit protein uL5">
    <location>
        <begin position="1"/>
        <end position="180"/>
    </location>
</feature>
<comment type="function">
    <text evidence="1">This is one of the proteins that bind and probably mediate the attachment of the 5S RNA into the large ribosomal subunit, where it forms part of the central protuberance. In the 70S ribosome it contacts protein S13 of the 30S subunit (bridge B1b), connecting the 2 subunits; this bridge is implicated in subunit movement. Contacts the P site tRNA; the 5S rRNA and some of its associated proteins might help stabilize positioning of ribosome-bound tRNAs.</text>
</comment>
<comment type="subunit">
    <text evidence="1">Part of the 50S ribosomal subunit; part of the 5S rRNA/L5/L18/L25 subcomplex. Contacts the 5S rRNA and the P site tRNA. Forms a bridge to the 30S subunit in the 70S ribosome.</text>
</comment>
<comment type="similarity">
    <text evidence="1">Belongs to the universal ribosomal protein uL5 family.</text>
</comment>
<organism>
    <name type="scientific">Polynucleobacter necessarius subsp. necessarius (strain STIR1)</name>
    <dbReference type="NCBI Taxonomy" id="452638"/>
    <lineage>
        <taxon>Bacteria</taxon>
        <taxon>Pseudomonadati</taxon>
        <taxon>Pseudomonadota</taxon>
        <taxon>Betaproteobacteria</taxon>
        <taxon>Burkholderiales</taxon>
        <taxon>Burkholderiaceae</taxon>
        <taxon>Polynucleobacter</taxon>
    </lineage>
</organism>
<sequence>MSTRFQEHYQSKVVADLIAKFGYKSVMEVPRITKVTLNMGLGDAVNDKKIIENAVGDLTKVAGQKPVVTKAKKAIAGFKIRQGYPIGAMVTLRSSRMYEFLDRFVTVALPRVRDFRGISGKAFDGRGNYNIGVKEQIIFPEIEYDKIDALRGLNISITTTAKTDEEAKALLAAFKFPFRN</sequence>
<reference key="1">
    <citation type="journal article" date="2013" name="Proc. Natl. Acad. Sci. U.S.A.">
        <title>Polynucleobacter necessarius, a model for genome reduction in both free-living and symbiotic bacteria.</title>
        <authorList>
            <person name="Boscaro V."/>
            <person name="Felletti M."/>
            <person name="Vannini C."/>
            <person name="Ackerman M.S."/>
            <person name="Chain P.S."/>
            <person name="Malfatti S."/>
            <person name="Vergez L.M."/>
            <person name="Shin M."/>
            <person name="Doak T.G."/>
            <person name="Lynch M."/>
            <person name="Petroni G."/>
        </authorList>
    </citation>
    <scope>NUCLEOTIDE SEQUENCE [LARGE SCALE GENOMIC DNA]</scope>
    <source>
        <strain>STIR1</strain>
    </source>
</reference>